<proteinExistence type="evidence at transcript level"/>
<evidence type="ECO:0000250" key="1"/>
<evidence type="ECO:0000305" key="2"/>
<feature type="chain" id="PRO_0000208413" description="Acetyl-coenzyme A synthetase">
    <location>
        <begin position="1"/>
        <end position="670"/>
    </location>
</feature>
<feature type="binding site" evidence="1">
    <location>
        <begin position="211"/>
        <end position="214"/>
    </location>
    <ligand>
        <name>CoA</name>
        <dbReference type="ChEBI" id="CHEBI:57287"/>
    </ligand>
</feature>
<feature type="binding site" evidence="1">
    <location>
        <position position="329"/>
    </location>
    <ligand>
        <name>CoA</name>
        <dbReference type="ChEBI" id="CHEBI:57287"/>
    </ligand>
</feature>
<feature type="binding site" evidence="1">
    <location>
        <begin position="404"/>
        <end position="406"/>
    </location>
    <ligand>
        <name>ATP</name>
        <dbReference type="ChEBI" id="CHEBI:30616"/>
    </ligand>
</feature>
<feature type="binding site" evidence="1">
    <location>
        <begin position="428"/>
        <end position="433"/>
    </location>
    <ligand>
        <name>ATP</name>
        <dbReference type="ChEBI" id="CHEBI:30616"/>
    </ligand>
</feature>
<feature type="binding site" evidence="1">
    <location>
        <position position="519"/>
    </location>
    <ligand>
        <name>ATP</name>
        <dbReference type="ChEBI" id="CHEBI:30616"/>
    </ligand>
</feature>
<feature type="binding site" evidence="1">
    <location>
        <position position="534"/>
    </location>
    <ligand>
        <name>ATP</name>
        <dbReference type="ChEBI" id="CHEBI:30616"/>
    </ligand>
</feature>
<feature type="binding site" evidence="1">
    <location>
        <position position="542"/>
    </location>
    <ligand>
        <name>CoA</name>
        <dbReference type="ChEBI" id="CHEBI:57287"/>
    </ligand>
</feature>
<feature type="binding site" evidence="1">
    <location>
        <position position="545"/>
    </location>
    <ligand>
        <name>ATP</name>
        <dbReference type="ChEBI" id="CHEBI:30616"/>
    </ligand>
</feature>
<feature type="binding site" evidence="1">
    <location>
        <position position="603"/>
    </location>
    <ligand>
        <name>CoA</name>
        <dbReference type="ChEBI" id="CHEBI:57287"/>
    </ligand>
</feature>
<feature type="sequence conflict" description="In Ref. 1; CAA34858." evidence="2" ref="1">
    <original>C</original>
    <variation>V</variation>
    <location>
        <position position="343"/>
    </location>
</feature>
<feature type="sequence conflict" description="In Ref. 1; CAA34858." evidence="2" ref="1">
    <original>N</original>
    <variation>Q</variation>
    <location>
        <position position="509"/>
    </location>
</feature>
<feature type="sequence conflict" description="In Ref. 1; CAA34858." evidence="2" ref="1">
    <original>D</original>
    <variation>S</variation>
    <location>
        <position position="647"/>
    </location>
</feature>
<accession>P16928</accession>
<accession>C8VFX2</accession>
<accession>Q5B1F4</accession>
<dbReference type="EC" id="6.2.1.1"/>
<dbReference type="EMBL" id="X16990">
    <property type="protein sequence ID" value="CAA34858.1"/>
    <property type="molecule type" value="Genomic_DNA"/>
</dbReference>
<dbReference type="EMBL" id="AACD01000098">
    <property type="protein sequence ID" value="EAA62719.1"/>
    <property type="molecule type" value="Genomic_DNA"/>
</dbReference>
<dbReference type="EMBL" id="BN001305">
    <property type="protein sequence ID" value="CBF81525.1"/>
    <property type="molecule type" value="Genomic_DNA"/>
</dbReference>
<dbReference type="PIR" id="S09245">
    <property type="entry name" value="SYASAA"/>
</dbReference>
<dbReference type="RefSeq" id="XP_663230.1">
    <property type="nucleotide sequence ID" value="XM_658138.1"/>
</dbReference>
<dbReference type="SMR" id="P16928"/>
<dbReference type="FunCoup" id="P16928">
    <property type="interactions" value="734"/>
</dbReference>
<dbReference type="STRING" id="227321.P16928"/>
<dbReference type="EnsemblFungi" id="CBF81525">
    <property type="protein sequence ID" value="CBF81525"/>
    <property type="gene ID" value="ANIA_05626"/>
</dbReference>
<dbReference type="KEGG" id="ani:ANIA_05626"/>
<dbReference type="VEuPathDB" id="FungiDB:AN5626"/>
<dbReference type="eggNOG" id="KOG1175">
    <property type="taxonomic scope" value="Eukaryota"/>
</dbReference>
<dbReference type="HOGENOM" id="CLU_000022_3_6_1"/>
<dbReference type="InParanoid" id="P16928"/>
<dbReference type="OMA" id="INVSYNC"/>
<dbReference type="OrthoDB" id="1706066at2759"/>
<dbReference type="Proteomes" id="UP000000560">
    <property type="component" value="Chromosome V"/>
</dbReference>
<dbReference type="GO" id="GO:0005829">
    <property type="term" value="C:cytosol"/>
    <property type="evidence" value="ECO:0000318"/>
    <property type="project" value="GO_Central"/>
</dbReference>
<dbReference type="GO" id="GO:0005576">
    <property type="term" value="C:extracellular region"/>
    <property type="evidence" value="ECO:0000314"/>
    <property type="project" value="AspGD"/>
</dbReference>
<dbReference type="GO" id="GO:0005634">
    <property type="term" value="C:nucleus"/>
    <property type="evidence" value="ECO:0007669"/>
    <property type="project" value="EnsemblFungi"/>
</dbReference>
<dbReference type="GO" id="GO:0003987">
    <property type="term" value="F:acetate-CoA ligase activity"/>
    <property type="evidence" value="ECO:0000318"/>
    <property type="project" value="GO_Central"/>
</dbReference>
<dbReference type="GO" id="GO:0016208">
    <property type="term" value="F:AMP binding"/>
    <property type="evidence" value="ECO:0007669"/>
    <property type="project" value="InterPro"/>
</dbReference>
<dbReference type="GO" id="GO:0005524">
    <property type="term" value="F:ATP binding"/>
    <property type="evidence" value="ECO:0007669"/>
    <property type="project" value="UniProtKB-KW"/>
</dbReference>
<dbReference type="GO" id="GO:0045733">
    <property type="term" value="P:acetate catabolic process"/>
    <property type="evidence" value="ECO:0000315"/>
    <property type="project" value="AspGD"/>
</dbReference>
<dbReference type="GO" id="GO:0006085">
    <property type="term" value="P:acetyl-CoA biosynthetic process"/>
    <property type="evidence" value="ECO:0000318"/>
    <property type="project" value="GO_Central"/>
</dbReference>
<dbReference type="GO" id="GO:0019427">
    <property type="term" value="P:acetyl-CoA biosynthetic process from acetate"/>
    <property type="evidence" value="ECO:0007669"/>
    <property type="project" value="InterPro"/>
</dbReference>
<dbReference type="GO" id="GO:0015976">
    <property type="term" value="P:carbon utilization"/>
    <property type="evidence" value="ECO:0000315"/>
    <property type="project" value="AspGD"/>
</dbReference>
<dbReference type="CDD" id="cd05966">
    <property type="entry name" value="ACS"/>
    <property type="match status" value="1"/>
</dbReference>
<dbReference type="FunFam" id="3.30.300.30:FF:000004">
    <property type="entry name" value="Acetyl-coenzyme A synthetase"/>
    <property type="match status" value="1"/>
</dbReference>
<dbReference type="FunFam" id="3.40.50.12780:FF:000001">
    <property type="entry name" value="Acetyl-coenzyme A synthetase"/>
    <property type="match status" value="1"/>
</dbReference>
<dbReference type="Gene3D" id="3.30.300.30">
    <property type="match status" value="1"/>
</dbReference>
<dbReference type="Gene3D" id="3.40.50.12780">
    <property type="entry name" value="N-terminal domain of ligase-like"/>
    <property type="match status" value="1"/>
</dbReference>
<dbReference type="InterPro" id="IPR011904">
    <property type="entry name" value="Ac_CoA_lig"/>
</dbReference>
<dbReference type="InterPro" id="IPR032387">
    <property type="entry name" value="ACAS_N"/>
</dbReference>
<dbReference type="InterPro" id="IPR025110">
    <property type="entry name" value="AMP-bd_C"/>
</dbReference>
<dbReference type="InterPro" id="IPR045851">
    <property type="entry name" value="AMP-bd_C_sf"/>
</dbReference>
<dbReference type="InterPro" id="IPR020845">
    <property type="entry name" value="AMP-binding_CS"/>
</dbReference>
<dbReference type="InterPro" id="IPR000873">
    <property type="entry name" value="AMP-dep_synth/lig_dom"/>
</dbReference>
<dbReference type="InterPro" id="IPR042099">
    <property type="entry name" value="ANL_N_sf"/>
</dbReference>
<dbReference type="NCBIfam" id="TIGR02188">
    <property type="entry name" value="Ac_CoA_lig_AcsA"/>
    <property type="match status" value="1"/>
</dbReference>
<dbReference type="NCBIfam" id="NF001208">
    <property type="entry name" value="PRK00174.1"/>
    <property type="match status" value="1"/>
</dbReference>
<dbReference type="PANTHER" id="PTHR24095">
    <property type="entry name" value="ACETYL-COENZYME A SYNTHETASE"/>
    <property type="match status" value="1"/>
</dbReference>
<dbReference type="PANTHER" id="PTHR24095:SF14">
    <property type="entry name" value="ACETYL-COENZYME A SYNTHETASE 1"/>
    <property type="match status" value="1"/>
</dbReference>
<dbReference type="Pfam" id="PF16177">
    <property type="entry name" value="ACAS_N"/>
    <property type="match status" value="1"/>
</dbReference>
<dbReference type="Pfam" id="PF00501">
    <property type="entry name" value="AMP-binding"/>
    <property type="match status" value="1"/>
</dbReference>
<dbReference type="Pfam" id="PF13193">
    <property type="entry name" value="AMP-binding_C"/>
    <property type="match status" value="1"/>
</dbReference>
<dbReference type="SUPFAM" id="SSF56801">
    <property type="entry name" value="Acetyl-CoA synthetase-like"/>
    <property type="match status" value="1"/>
</dbReference>
<dbReference type="PROSITE" id="PS00455">
    <property type="entry name" value="AMP_BINDING"/>
    <property type="match status" value="1"/>
</dbReference>
<keyword id="KW-0067">ATP-binding</keyword>
<keyword id="KW-0436">Ligase</keyword>
<keyword id="KW-0547">Nucleotide-binding</keyword>
<keyword id="KW-1185">Reference proteome</keyword>
<sequence length="670" mass="74280">MSDGPIAPPKPAVVAEAHEVDTFHVPKAFFDKHPSGPHLKNLDEYKKLYEESIRSPDVFWARKARELLTFDKDFQTTRIGSLENGDVAWFPEGRLNASFNCVDRHAIKNPNKVAIIYEADEPNEGRTITYGELLREVSRVAWVLKQRGVKKGDTVAIYLPMIPEAIIAFLACSRIGAVHSVVFAGFSSDSLRDRVLDAGSKVVITTDEGKRGGKVIGTKRIVDEGLKQCPDVSTVLVYKRTGAEVPWTEGRDIWWHEEVEKYPAYIAPDSVNSEDPLFLLYTSGSTGKPKGVMHTTAGYLLGAAMTGKYVFDIHDDDRYFCGGDVGWITGHTYVVYAPLLLGCSTVVFESTPAYPDFSRYWDVIEKHKVTQFYVAPTALRLLKRAGDHHIHHKMEHLRVLGSVGEPIAAEVWKWYFEKVGKEEAHICDTYWQTETGSNVITPLAGVTPTKPGSASLPFFGIEPAIIDPVSGEEISGNDVEGVLAFKQPWPSMARTVWGAHKRYMDTYLNVYKGYYFTGDGAGRDHEGYYWIRGRVDDVVNVSGHRLSTAEIEAALIEHPMVAEAAVVGIADELTGQAVNAFVSLKEGNETNDQVRKDLILQVRKSIGPFAAPKAVFVVDDLPKTRSGKIMRRILRKILSGEEDSLGDISTLSDPSVVERIIATVHASRGK</sequence>
<comment type="catalytic activity">
    <reaction>
        <text>acetate + ATP + CoA = acetyl-CoA + AMP + diphosphate</text>
        <dbReference type="Rhea" id="RHEA:23176"/>
        <dbReference type="ChEBI" id="CHEBI:30089"/>
        <dbReference type="ChEBI" id="CHEBI:30616"/>
        <dbReference type="ChEBI" id="CHEBI:33019"/>
        <dbReference type="ChEBI" id="CHEBI:57287"/>
        <dbReference type="ChEBI" id="CHEBI:57288"/>
        <dbReference type="ChEBI" id="CHEBI:456215"/>
        <dbReference type="EC" id="6.2.1.1"/>
    </reaction>
</comment>
<comment type="induction">
    <text>By acetate.</text>
</comment>
<comment type="similarity">
    <text evidence="2">Belongs to the ATP-dependent AMP-binding enzyme family.</text>
</comment>
<name>ACSA_EMENI</name>
<gene>
    <name type="primary">facA</name>
    <name type="synonym">acuA</name>
    <name type="ORF">AN5626</name>
</gene>
<protein>
    <recommendedName>
        <fullName>Acetyl-coenzyme A synthetase</fullName>
        <ecNumber>6.2.1.1</ecNumber>
    </recommendedName>
    <alternativeName>
        <fullName>Acetate--CoA ligase</fullName>
    </alternativeName>
    <alternativeName>
        <fullName>Acyl-activating enzyme</fullName>
    </alternativeName>
</protein>
<reference key="1">
    <citation type="journal article" date="1990" name="Mol. Microbiol.">
        <title>Comparison and cross-species expression of the acetyl-CoA synthetase genes of the Ascomycete fungi, Aspergillus nidulans and Neurospora crassa.</title>
        <authorList>
            <person name="Connerton I.F."/>
            <person name="Fincham J.R.S."/>
            <person name="Sandeman R.A."/>
            <person name="Hynes M.J."/>
        </authorList>
    </citation>
    <scope>NUCLEOTIDE SEQUENCE [GENOMIC DNA]</scope>
    <source>
        <strain>D1</strain>
    </source>
</reference>
<reference key="2">
    <citation type="journal article" date="2005" name="Nature">
        <title>Sequencing of Aspergillus nidulans and comparative analysis with A. fumigatus and A. oryzae.</title>
        <authorList>
            <person name="Galagan J.E."/>
            <person name="Calvo S.E."/>
            <person name="Cuomo C."/>
            <person name="Ma L.-J."/>
            <person name="Wortman J.R."/>
            <person name="Batzoglou S."/>
            <person name="Lee S.-I."/>
            <person name="Bastuerkmen M."/>
            <person name="Spevak C.C."/>
            <person name="Clutterbuck J."/>
            <person name="Kapitonov V."/>
            <person name="Jurka J."/>
            <person name="Scazzocchio C."/>
            <person name="Farman M.L."/>
            <person name="Butler J."/>
            <person name="Purcell S."/>
            <person name="Harris S."/>
            <person name="Braus G.H."/>
            <person name="Draht O."/>
            <person name="Busch S."/>
            <person name="D'Enfert C."/>
            <person name="Bouchier C."/>
            <person name="Goldman G.H."/>
            <person name="Bell-Pedersen D."/>
            <person name="Griffiths-Jones S."/>
            <person name="Doonan J.H."/>
            <person name="Yu J."/>
            <person name="Vienken K."/>
            <person name="Pain A."/>
            <person name="Freitag M."/>
            <person name="Selker E.U."/>
            <person name="Archer D.B."/>
            <person name="Penalva M.A."/>
            <person name="Oakley B.R."/>
            <person name="Momany M."/>
            <person name="Tanaka T."/>
            <person name="Kumagai T."/>
            <person name="Asai K."/>
            <person name="Machida M."/>
            <person name="Nierman W.C."/>
            <person name="Denning D.W."/>
            <person name="Caddick M.X."/>
            <person name="Hynes M."/>
            <person name="Paoletti M."/>
            <person name="Fischer R."/>
            <person name="Miller B.L."/>
            <person name="Dyer P.S."/>
            <person name="Sachs M.S."/>
            <person name="Osmani S.A."/>
            <person name="Birren B.W."/>
        </authorList>
    </citation>
    <scope>NUCLEOTIDE SEQUENCE [LARGE SCALE GENOMIC DNA]</scope>
    <source>
        <strain>FGSC A4 / ATCC 38163 / CBS 112.46 / NRRL 194 / M139</strain>
    </source>
</reference>
<reference key="3">
    <citation type="journal article" date="2009" name="Fungal Genet. Biol.">
        <title>The 2008 update of the Aspergillus nidulans genome annotation: a community effort.</title>
        <authorList>
            <person name="Wortman J.R."/>
            <person name="Gilsenan J.M."/>
            <person name="Joardar V."/>
            <person name="Deegan J."/>
            <person name="Clutterbuck J."/>
            <person name="Andersen M.R."/>
            <person name="Archer D."/>
            <person name="Bencina M."/>
            <person name="Braus G."/>
            <person name="Coutinho P."/>
            <person name="von Dohren H."/>
            <person name="Doonan J."/>
            <person name="Driessen A.J."/>
            <person name="Durek P."/>
            <person name="Espeso E."/>
            <person name="Fekete E."/>
            <person name="Flipphi M."/>
            <person name="Estrada C.G."/>
            <person name="Geysens S."/>
            <person name="Goldman G."/>
            <person name="de Groot P.W."/>
            <person name="Hansen K."/>
            <person name="Harris S.D."/>
            <person name="Heinekamp T."/>
            <person name="Helmstaedt K."/>
            <person name="Henrissat B."/>
            <person name="Hofmann G."/>
            <person name="Homan T."/>
            <person name="Horio T."/>
            <person name="Horiuchi H."/>
            <person name="James S."/>
            <person name="Jones M."/>
            <person name="Karaffa L."/>
            <person name="Karanyi Z."/>
            <person name="Kato M."/>
            <person name="Keller N."/>
            <person name="Kelly D.E."/>
            <person name="Kiel J.A."/>
            <person name="Kim J.M."/>
            <person name="van der Klei I.J."/>
            <person name="Klis F.M."/>
            <person name="Kovalchuk A."/>
            <person name="Krasevec N."/>
            <person name="Kubicek C.P."/>
            <person name="Liu B."/>
            <person name="Maccabe A."/>
            <person name="Meyer V."/>
            <person name="Mirabito P."/>
            <person name="Miskei M."/>
            <person name="Mos M."/>
            <person name="Mullins J."/>
            <person name="Nelson D.R."/>
            <person name="Nielsen J."/>
            <person name="Oakley B.R."/>
            <person name="Osmani S.A."/>
            <person name="Pakula T."/>
            <person name="Paszewski A."/>
            <person name="Paulsen I."/>
            <person name="Pilsyk S."/>
            <person name="Pocsi I."/>
            <person name="Punt P.J."/>
            <person name="Ram A.F."/>
            <person name="Ren Q."/>
            <person name="Robellet X."/>
            <person name="Robson G."/>
            <person name="Seiboth B."/>
            <person name="van Solingen P."/>
            <person name="Specht T."/>
            <person name="Sun J."/>
            <person name="Taheri-Talesh N."/>
            <person name="Takeshita N."/>
            <person name="Ussery D."/>
            <person name="vanKuyk P.A."/>
            <person name="Visser H."/>
            <person name="van de Vondervoort P.J."/>
            <person name="de Vries R.P."/>
            <person name="Walton J."/>
            <person name="Xiang X."/>
            <person name="Xiong Y."/>
            <person name="Zeng A.P."/>
            <person name="Brandt B.W."/>
            <person name="Cornell M.J."/>
            <person name="van den Hondel C.A."/>
            <person name="Visser J."/>
            <person name="Oliver S.G."/>
            <person name="Turner G."/>
        </authorList>
    </citation>
    <scope>GENOME REANNOTATION</scope>
    <source>
        <strain>FGSC A4 / ATCC 38163 / CBS 112.46 / NRRL 194 / M139</strain>
    </source>
</reference>
<organism>
    <name type="scientific">Emericella nidulans (strain FGSC A4 / ATCC 38163 / CBS 112.46 / NRRL 194 / M139)</name>
    <name type="common">Aspergillus nidulans</name>
    <dbReference type="NCBI Taxonomy" id="227321"/>
    <lineage>
        <taxon>Eukaryota</taxon>
        <taxon>Fungi</taxon>
        <taxon>Dikarya</taxon>
        <taxon>Ascomycota</taxon>
        <taxon>Pezizomycotina</taxon>
        <taxon>Eurotiomycetes</taxon>
        <taxon>Eurotiomycetidae</taxon>
        <taxon>Eurotiales</taxon>
        <taxon>Aspergillaceae</taxon>
        <taxon>Aspergillus</taxon>
        <taxon>Aspergillus subgen. Nidulantes</taxon>
    </lineage>
</organism>